<sequence>MRVLVQRVCSAAVTVDGDVVGAVRPPGQGLLAFVGVTHGDDGDKARRLAEKLWYLRILTDEKSASDLGAPILVVSQFTLYADTVKGRRPSWNAAAPRAVAEPLVAAFAEALRALGAHVEAGVFGAHMQVELINDGPVTVMLEL</sequence>
<comment type="function">
    <text evidence="1">An aminoacyl-tRNA editing enzyme that deacylates mischarged D-aminoacyl-tRNAs. Also deacylates mischarged glycyl-tRNA(Ala), protecting cells against glycine mischarging by AlaRS. Acts via tRNA-based rather than protein-based catalysis; rejects L-amino acids rather than detecting D-amino acids in the active site. By recycling D-aminoacyl-tRNA to D-amino acids and free tRNA molecules, this enzyme counteracts the toxicity associated with the formation of D-aminoacyl-tRNA entities in vivo and helps enforce protein L-homochirality.</text>
</comment>
<comment type="catalytic activity">
    <reaction evidence="1">
        <text>glycyl-tRNA(Ala) + H2O = tRNA(Ala) + glycine + H(+)</text>
        <dbReference type="Rhea" id="RHEA:53744"/>
        <dbReference type="Rhea" id="RHEA-COMP:9657"/>
        <dbReference type="Rhea" id="RHEA-COMP:13640"/>
        <dbReference type="ChEBI" id="CHEBI:15377"/>
        <dbReference type="ChEBI" id="CHEBI:15378"/>
        <dbReference type="ChEBI" id="CHEBI:57305"/>
        <dbReference type="ChEBI" id="CHEBI:78442"/>
        <dbReference type="ChEBI" id="CHEBI:78522"/>
        <dbReference type="EC" id="3.1.1.96"/>
    </reaction>
</comment>
<comment type="catalytic activity">
    <reaction evidence="1">
        <text>a D-aminoacyl-tRNA + H2O = a tRNA + a D-alpha-amino acid + H(+)</text>
        <dbReference type="Rhea" id="RHEA:13953"/>
        <dbReference type="Rhea" id="RHEA-COMP:10123"/>
        <dbReference type="Rhea" id="RHEA-COMP:10124"/>
        <dbReference type="ChEBI" id="CHEBI:15377"/>
        <dbReference type="ChEBI" id="CHEBI:15378"/>
        <dbReference type="ChEBI" id="CHEBI:59871"/>
        <dbReference type="ChEBI" id="CHEBI:78442"/>
        <dbReference type="ChEBI" id="CHEBI:79333"/>
        <dbReference type="EC" id="3.1.1.96"/>
    </reaction>
</comment>
<comment type="subunit">
    <text evidence="1">Homodimer.</text>
</comment>
<comment type="subcellular location">
    <subcellularLocation>
        <location evidence="1">Cytoplasm</location>
    </subcellularLocation>
</comment>
<comment type="domain">
    <text evidence="1">A Gly-cisPro motif from one monomer fits into the active site of the other monomer to allow specific chiral rejection of L-amino acids.</text>
</comment>
<comment type="similarity">
    <text evidence="1">Belongs to the DTD family.</text>
</comment>
<evidence type="ECO:0000255" key="1">
    <source>
        <dbReference type="HAMAP-Rule" id="MF_00518"/>
    </source>
</evidence>
<organism>
    <name type="scientific">Mycobacterium ulcerans (strain Agy99)</name>
    <dbReference type="NCBI Taxonomy" id="362242"/>
    <lineage>
        <taxon>Bacteria</taxon>
        <taxon>Bacillati</taxon>
        <taxon>Actinomycetota</taxon>
        <taxon>Actinomycetes</taxon>
        <taxon>Mycobacteriales</taxon>
        <taxon>Mycobacteriaceae</taxon>
        <taxon>Mycobacterium</taxon>
        <taxon>Mycobacterium ulcerans group</taxon>
    </lineage>
</organism>
<keyword id="KW-0963">Cytoplasm</keyword>
<keyword id="KW-0378">Hydrolase</keyword>
<keyword id="KW-0694">RNA-binding</keyword>
<keyword id="KW-0820">tRNA-binding</keyword>
<dbReference type="EC" id="3.1.1.96" evidence="1"/>
<dbReference type="EMBL" id="CP000325">
    <property type="protein sequence ID" value="ABL05222.1"/>
    <property type="molecule type" value="Genomic_DNA"/>
</dbReference>
<dbReference type="RefSeq" id="WP_011740834.1">
    <property type="nucleotide sequence ID" value="NC_008611.1"/>
</dbReference>
<dbReference type="SMR" id="A0PSA3"/>
<dbReference type="GeneID" id="93437079"/>
<dbReference type="KEGG" id="mul:MUL_2960"/>
<dbReference type="eggNOG" id="COG1490">
    <property type="taxonomic scope" value="Bacteria"/>
</dbReference>
<dbReference type="HOGENOM" id="CLU_076901_1_2_11"/>
<dbReference type="Proteomes" id="UP000000765">
    <property type="component" value="Chromosome"/>
</dbReference>
<dbReference type="GO" id="GO:0005737">
    <property type="term" value="C:cytoplasm"/>
    <property type="evidence" value="ECO:0007669"/>
    <property type="project" value="UniProtKB-SubCell"/>
</dbReference>
<dbReference type="GO" id="GO:0051500">
    <property type="term" value="F:D-tyrosyl-tRNA(Tyr) deacylase activity"/>
    <property type="evidence" value="ECO:0007669"/>
    <property type="project" value="TreeGrafter"/>
</dbReference>
<dbReference type="GO" id="GO:0106026">
    <property type="term" value="F:Gly-tRNA(Ala) deacylase activity"/>
    <property type="evidence" value="ECO:0007669"/>
    <property type="project" value="UniProtKB-UniRule"/>
</dbReference>
<dbReference type="GO" id="GO:0043908">
    <property type="term" value="F:Ser(Gly)-tRNA(Ala) hydrolase activity"/>
    <property type="evidence" value="ECO:0007669"/>
    <property type="project" value="UniProtKB-UniRule"/>
</dbReference>
<dbReference type="GO" id="GO:0000049">
    <property type="term" value="F:tRNA binding"/>
    <property type="evidence" value="ECO:0007669"/>
    <property type="project" value="UniProtKB-UniRule"/>
</dbReference>
<dbReference type="GO" id="GO:0019478">
    <property type="term" value="P:D-amino acid catabolic process"/>
    <property type="evidence" value="ECO:0007669"/>
    <property type="project" value="UniProtKB-UniRule"/>
</dbReference>
<dbReference type="CDD" id="cd00563">
    <property type="entry name" value="Dtyr_deacylase"/>
    <property type="match status" value="1"/>
</dbReference>
<dbReference type="FunFam" id="3.50.80.10:FF:000002">
    <property type="entry name" value="D-aminoacyl-tRNA deacylase"/>
    <property type="match status" value="1"/>
</dbReference>
<dbReference type="Gene3D" id="3.50.80.10">
    <property type="entry name" value="D-tyrosyl-tRNA(Tyr) deacylase"/>
    <property type="match status" value="1"/>
</dbReference>
<dbReference type="HAMAP" id="MF_00518">
    <property type="entry name" value="Deacylase_Dtd"/>
    <property type="match status" value="1"/>
</dbReference>
<dbReference type="InterPro" id="IPR003732">
    <property type="entry name" value="Daa-tRNA_deacyls_DTD"/>
</dbReference>
<dbReference type="InterPro" id="IPR023509">
    <property type="entry name" value="DTD-like_sf"/>
</dbReference>
<dbReference type="NCBIfam" id="TIGR00256">
    <property type="entry name" value="D-aminoacyl-tRNA deacylase"/>
    <property type="match status" value="1"/>
</dbReference>
<dbReference type="PANTHER" id="PTHR10472:SF5">
    <property type="entry name" value="D-AMINOACYL-TRNA DEACYLASE 1"/>
    <property type="match status" value="1"/>
</dbReference>
<dbReference type="PANTHER" id="PTHR10472">
    <property type="entry name" value="D-TYROSYL-TRNA TYR DEACYLASE"/>
    <property type="match status" value="1"/>
</dbReference>
<dbReference type="Pfam" id="PF02580">
    <property type="entry name" value="Tyr_Deacylase"/>
    <property type="match status" value="1"/>
</dbReference>
<dbReference type="SUPFAM" id="SSF69500">
    <property type="entry name" value="DTD-like"/>
    <property type="match status" value="1"/>
</dbReference>
<proteinExistence type="inferred from homology"/>
<accession>A0PSA3</accession>
<protein>
    <recommendedName>
        <fullName evidence="1">D-aminoacyl-tRNA deacylase</fullName>
        <shortName evidence="1">DTD</shortName>
        <ecNumber evidence="1">3.1.1.96</ecNumber>
    </recommendedName>
    <alternativeName>
        <fullName evidence="1">Gly-tRNA(Ala) deacylase</fullName>
    </alternativeName>
</protein>
<reference key="1">
    <citation type="journal article" date="2007" name="Genome Res.">
        <title>Reductive evolution and niche adaptation inferred from the genome of Mycobacterium ulcerans, the causative agent of Buruli ulcer.</title>
        <authorList>
            <person name="Stinear T.P."/>
            <person name="Seemann T."/>
            <person name="Pidot S."/>
            <person name="Frigui W."/>
            <person name="Reysset G."/>
            <person name="Garnier T."/>
            <person name="Meurice G."/>
            <person name="Simon D."/>
            <person name="Bouchier C."/>
            <person name="Ma L."/>
            <person name="Tichit M."/>
            <person name="Porter J.L."/>
            <person name="Ryan J."/>
            <person name="Johnson P.D.R."/>
            <person name="Davies J.K."/>
            <person name="Jenkin G.A."/>
            <person name="Small P.L.C."/>
            <person name="Jones L.M."/>
            <person name="Tekaia F."/>
            <person name="Laval F."/>
            <person name="Daffe M."/>
            <person name="Parkhill J."/>
            <person name="Cole S.T."/>
        </authorList>
    </citation>
    <scope>NUCLEOTIDE SEQUENCE [LARGE SCALE GENOMIC DNA]</scope>
    <source>
        <strain>Agy99</strain>
    </source>
</reference>
<name>DTD_MYCUA</name>
<gene>
    <name evidence="1" type="primary">dtd</name>
    <name type="ordered locus">MUL_2960</name>
</gene>
<feature type="chain" id="PRO_1000050858" description="D-aminoacyl-tRNA deacylase">
    <location>
        <begin position="1"/>
        <end position="143"/>
    </location>
</feature>
<feature type="short sequence motif" description="Gly-cisPro motif, important for rejection of L-amino acids" evidence="1">
    <location>
        <begin position="135"/>
        <end position="136"/>
    </location>
</feature>